<reference key="1">
    <citation type="journal article" date="2004" name="Nat. Genet.">
        <title>Comparison of genome degradation in Paratyphi A and Typhi, human-restricted serovars of Salmonella enterica that cause typhoid.</title>
        <authorList>
            <person name="McClelland M."/>
            <person name="Sanderson K.E."/>
            <person name="Clifton S.W."/>
            <person name="Latreille P."/>
            <person name="Porwollik S."/>
            <person name="Sabo A."/>
            <person name="Meyer R."/>
            <person name="Bieri T."/>
            <person name="Ozersky P."/>
            <person name="McLellan M."/>
            <person name="Harkins C.R."/>
            <person name="Wang C."/>
            <person name="Nguyen C."/>
            <person name="Berghoff A."/>
            <person name="Elliott G."/>
            <person name="Kohlberg S."/>
            <person name="Strong C."/>
            <person name="Du F."/>
            <person name="Carter J."/>
            <person name="Kremizki C."/>
            <person name="Layman D."/>
            <person name="Leonard S."/>
            <person name="Sun H."/>
            <person name="Fulton L."/>
            <person name="Nash W."/>
            <person name="Miner T."/>
            <person name="Minx P."/>
            <person name="Delehaunty K."/>
            <person name="Fronick C."/>
            <person name="Magrini V."/>
            <person name="Nhan M."/>
            <person name="Warren W."/>
            <person name="Florea L."/>
            <person name="Spieth J."/>
            <person name="Wilson R.K."/>
        </authorList>
    </citation>
    <scope>NUCLEOTIDE SEQUENCE [LARGE SCALE GENOMIC DNA]</scope>
    <source>
        <strain>ATCC 9150 / SARB42</strain>
    </source>
</reference>
<protein>
    <recommendedName>
        <fullName evidence="1">Ribosomal RNA large subunit methyltransferase E</fullName>
        <ecNumber evidence="1">2.1.1.166</ecNumber>
    </recommendedName>
    <alternativeName>
        <fullName evidence="1">23S rRNA Um2552 methyltransferase</fullName>
    </alternativeName>
    <alternativeName>
        <fullName evidence="1">rRNA (uridine-2'-O-)-methyltransferase</fullName>
    </alternativeName>
</protein>
<feature type="chain" id="PRO_0000155537" description="Ribosomal RNA large subunit methyltransferase E">
    <location>
        <begin position="1"/>
        <end position="208"/>
    </location>
</feature>
<feature type="active site" description="Proton acceptor" evidence="1">
    <location>
        <position position="164"/>
    </location>
</feature>
<feature type="binding site" evidence="1">
    <location>
        <position position="63"/>
    </location>
    <ligand>
        <name>S-adenosyl-L-methionine</name>
        <dbReference type="ChEBI" id="CHEBI:59789"/>
    </ligand>
</feature>
<feature type="binding site" evidence="1">
    <location>
        <position position="65"/>
    </location>
    <ligand>
        <name>S-adenosyl-L-methionine</name>
        <dbReference type="ChEBI" id="CHEBI:59789"/>
    </ligand>
</feature>
<feature type="binding site" evidence="1">
    <location>
        <position position="83"/>
    </location>
    <ligand>
        <name>S-adenosyl-L-methionine</name>
        <dbReference type="ChEBI" id="CHEBI:59789"/>
    </ligand>
</feature>
<feature type="binding site" evidence="1">
    <location>
        <position position="99"/>
    </location>
    <ligand>
        <name>S-adenosyl-L-methionine</name>
        <dbReference type="ChEBI" id="CHEBI:59789"/>
    </ligand>
</feature>
<feature type="binding site" evidence="1">
    <location>
        <position position="124"/>
    </location>
    <ligand>
        <name>S-adenosyl-L-methionine</name>
        <dbReference type="ChEBI" id="CHEBI:59789"/>
    </ligand>
</feature>
<comment type="function">
    <text evidence="1">Specifically methylates the uridine in position 2552 of 23S rRNA at the 2'-O position of the ribose in the fully assembled 50S ribosomal subunit.</text>
</comment>
<comment type="catalytic activity">
    <reaction evidence="1">
        <text>uridine(2552) in 23S rRNA + S-adenosyl-L-methionine = 2'-O-methyluridine(2552) in 23S rRNA + S-adenosyl-L-homocysteine + H(+)</text>
        <dbReference type="Rhea" id="RHEA:42720"/>
        <dbReference type="Rhea" id="RHEA-COMP:10202"/>
        <dbReference type="Rhea" id="RHEA-COMP:10203"/>
        <dbReference type="ChEBI" id="CHEBI:15378"/>
        <dbReference type="ChEBI" id="CHEBI:57856"/>
        <dbReference type="ChEBI" id="CHEBI:59789"/>
        <dbReference type="ChEBI" id="CHEBI:65315"/>
        <dbReference type="ChEBI" id="CHEBI:74478"/>
        <dbReference type="EC" id="2.1.1.166"/>
    </reaction>
</comment>
<comment type="subcellular location">
    <subcellularLocation>
        <location evidence="1">Cytoplasm</location>
    </subcellularLocation>
</comment>
<comment type="similarity">
    <text evidence="1">Belongs to the class I-like SAM-binding methyltransferase superfamily. RNA methyltransferase RlmE family.</text>
</comment>
<keyword id="KW-0963">Cytoplasm</keyword>
<keyword id="KW-0489">Methyltransferase</keyword>
<keyword id="KW-0698">rRNA processing</keyword>
<keyword id="KW-0949">S-adenosyl-L-methionine</keyword>
<keyword id="KW-0808">Transferase</keyword>
<accession>Q5PLC1</accession>
<gene>
    <name evidence="1" type="primary">rlmE</name>
    <name evidence="1" type="synonym">ftsJ</name>
    <name evidence="1" type="synonym">rrmJ</name>
    <name type="ordered locus">SPA3164</name>
</gene>
<dbReference type="EC" id="2.1.1.166" evidence="1"/>
<dbReference type="EMBL" id="CP000026">
    <property type="protein sequence ID" value="AAV78989.1"/>
    <property type="molecule type" value="Genomic_DNA"/>
</dbReference>
<dbReference type="RefSeq" id="WP_000145973.1">
    <property type="nucleotide sequence ID" value="NC_006511.1"/>
</dbReference>
<dbReference type="SMR" id="Q5PLC1"/>
<dbReference type="KEGG" id="spt:SPA3164"/>
<dbReference type="HOGENOM" id="CLU_009422_4_0_6"/>
<dbReference type="Proteomes" id="UP000008185">
    <property type="component" value="Chromosome"/>
</dbReference>
<dbReference type="GO" id="GO:0005737">
    <property type="term" value="C:cytoplasm"/>
    <property type="evidence" value="ECO:0007669"/>
    <property type="project" value="UniProtKB-SubCell"/>
</dbReference>
<dbReference type="GO" id="GO:0008650">
    <property type="term" value="F:rRNA (uridine-2'-O-)-methyltransferase activity"/>
    <property type="evidence" value="ECO:0007669"/>
    <property type="project" value="UniProtKB-UniRule"/>
</dbReference>
<dbReference type="CDD" id="cd02440">
    <property type="entry name" value="AdoMet_MTases"/>
    <property type="match status" value="1"/>
</dbReference>
<dbReference type="FunFam" id="3.40.50.150:FF:000005">
    <property type="entry name" value="Ribosomal RNA large subunit methyltransferase E"/>
    <property type="match status" value="1"/>
</dbReference>
<dbReference type="Gene3D" id="3.40.50.150">
    <property type="entry name" value="Vaccinia Virus protein VP39"/>
    <property type="match status" value="1"/>
</dbReference>
<dbReference type="HAMAP" id="MF_01547">
    <property type="entry name" value="RNA_methyltr_E"/>
    <property type="match status" value="1"/>
</dbReference>
<dbReference type="InterPro" id="IPR050082">
    <property type="entry name" value="RNA_methyltr_RlmE"/>
</dbReference>
<dbReference type="InterPro" id="IPR002877">
    <property type="entry name" value="RNA_MeTrfase_FtsJ_dom"/>
</dbReference>
<dbReference type="InterPro" id="IPR015507">
    <property type="entry name" value="rRNA-MeTfrase_E"/>
</dbReference>
<dbReference type="InterPro" id="IPR004512">
    <property type="entry name" value="rRNA_MeTrfase_gammaproteobac"/>
</dbReference>
<dbReference type="InterPro" id="IPR029063">
    <property type="entry name" value="SAM-dependent_MTases_sf"/>
</dbReference>
<dbReference type="NCBIfam" id="NF008390">
    <property type="entry name" value="PRK11188.1"/>
    <property type="match status" value="1"/>
</dbReference>
<dbReference type="NCBIfam" id="TIGR00438">
    <property type="entry name" value="rrmJ"/>
    <property type="match status" value="1"/>
</dbReference>
<dbReference type="PANTHER" id="PTHR10920">
    <property type="entry name" value="RIBOSOMAL RNA METHYLTRANSFERASE"/>
    <property type="match status" value="1"/>
</dbReference>
<dbReference type="PANTHER" id="PTHR10920:SF18">
    <property type="entry name" value="RRNA METHYLTRANSFERASE 2, MITOCHONDRIAL"/>
    <property type="match status" value="1"/>
</dbReference>
<dbReference type="Pfam" id="PF01728">
    <property type="entry name" value="FtsJ"/>
    <property type="match status" value="1"/>
</dbReference>
<dbReference type="PIRSF" id="PIRSF005461">
    <property type="entry name" value="23S_rRNA_mtase"/>
    <property type="match status" value="1"/>
</dbReference>
<dbReference type="SUPFAM" id="SSF53335">
    <property type="entry name" value="S-adenosyl-L-methionine-dependent methyltransferases"/>
    <property type="match status" value="1"/>
</dbReference>
<organism>
    <name type="scientific">Salmonella paratyphi A (strain ATCC 9150 / SARB42)</name>
    <dbReference type="NCBI Taxonomy" id="295319"/>
    <lineage>
        <taxon>Bacteria</taxon>
        <taxon>Pseudomonadati</taxon>
        <taxon>Pseudomonadota</taxon>
        <taxon>Gammaproteobacteria</taxon>
        <taxon>Enterobacterales</taxon>
        <taxon>Enterobacteriaceae</taxon>
        <taxon>Salmonella</taxon>
    </lineage>
</organism>
<proteinExistence type="inferred from homology"/>
<name>RLME_SALPA</name>
<evidence type="ECO:0000255" key="1">
    <source>
        <dbReference type="HAMAP-Rule" id="MF_01547"/>
    </source>
</evidence>
<sequence>MTGKKRSASSSRWLQEHFSDKYVQQAQKKGLRSRAWFKLDEIQQSDKLFKPGMTVVDLGAAPGGWSQYVVTQIGGKGRIIACDLLPMDPIVGVDFLQGDFRDELVMKALLERVGDSKVQVVMSDMAPNMSGTPAVDIPRAMYLVELALEMCRDVLAPGGSFVVKVFQGEGFDEYLREIRSLFTKVKIRKPDSSRARSREVYIVATGRK</sequence>